<feature type="initiator methionine" description="Removed" evidence="1">
    <location>
        <position position="1"/>
    </location>
</feature>
<feature type="chain" id="PRO_0000156481" description="Polyamine aminopropyltransferase">
    <location>
        <begin position="2"/>
        <end position="288"/>
    </location>
</feature>
<feature type="domain" description="PABS" evidence="2">
    <location>
        <begin position="9"/>
        <end position="238"/>
    </location>
</feature>
<feature type="active site" description="Proton acceptor" evidence="2">
    <location>
        <position position="158"/>
    </location>
</feature>
<feature type="binding site" evidence="2">
    <location>
        <position position="33"/>
    </location>
    <ligand>
        <name>S-methyl-5'-thioadenosine</name>
        <dbReference type="ChEBI" id="CHEBI:17509"/>
    </ligand>
</feature>
<feature type="binding site" evidence="2">
    <location>
        <position position="64"/>
    </location>
    <ligand>
        <name>spermidine</name>
        <dbReference type="ChEBI" id="CHEBI:57834"/>
    </ligand>
</feature>
<feature type="binding site" evidence="2">
    <location>
        <position position="88"/>
    </location>
    <ligand>
        <name>spermidine</name>
        <dbReference type="ChEBI" id="CHEBI:57834"/>
    </ligand>
</feature>
<feature type="binding site" evidence="2">
    <location>
        <position position="108"/>
    </location>
    <ligand>
        <name>S-methyl-5'-thioadenosine</name>
        <dbReference type="ChEBI" id="CHEBI:17509"/>
    </ligand>
</feature>
<feature type="binding site" evidence="2">
    <location>
        <begin position="140"/>
        <end position="141"/>
    </location>
    <ligand>
        <name>S-methyl-5'-thioadenosine</name>
        <dbReference type="ChEBI" id="CHEBI:17509"/>
    </ligand>
</feature>
<feature type="binding site" evidence="2">
    <location>
        <begin position="158"/>
        <end position="161"/>
    </location>
    <ligand>
        <name>spermidine</name>
        <dbReference type="ChEBI" id="CHEBI:57834"/>
    </ligand>
</feature>
<feature type="binding site" evidence="2">
    <location>
        <position position="165"/>
    </location>
    <ligand>
        <name>S-methyl-5'-thioadenosine</name>
        <dbReference type="ChEBI" id="CHEBI:17509"/>
    </ligand>
</feature>
<accession>P66834</accession>
<accession>Q8X951</accession>
<dbReference type="EC" id="2.5.1.16" evidence="2"/>
<dbReference type="EMBL" id="AE005174">
    <property type="protein sequence ID" value="AAG54425.1"/>
    <property type="molecule type" value="Genomic_DNA"/>
</dbReference>
<dbReference type="EMBL" id="BA000007">
    <property type="protein sequence ID" value="BAB33548.1"/>
    <property type="molecule type" value="Genomic_DNA"/>
</dbReference>
<dbReference type="PIR" id="E85495">
    <property type="entry name" value="E85495"/>
</dbReference>
<dbReference type="PIR" id="E90644">
    <property type="entry name" value="E90644"/>
</dbReference>
<dbReference type="RefSeq" id="NP_308152.1">
    <property type="nucleotide sequence ID" value="NC_002695.1"/>
</dbReference>
<dbReference type="RefSeq" id="WP_000818414.1">
    <property type="nucleotide sequence ID" value="NZ_VOAI01000002.1"/>
</dbReference>
<dbReference type="SMR" id="P66834"/>
<dbReference type="STRING" id="155864.Z0131"/>
<dbReference type="GeneID" id="913703"/>
<dbReference type="KEGG" id="ece:Z0131"/>
<dbReference type="KEGG" id="ecs:ECs_0125"/>
<dbReference type="PATRIC" id="fig|386585.9.peg.223"/>
<dbReference type="eggNOG" id="COG0421">
    <property type="taxonomic scope" value="Bacteria"/>
</dbReference>
<dbReference type="HOGENOM" id="CLU_048199_0_0_6"/>
<dbReference type="OMA" id="FLYHEMM"/>
<dbReference type="UniPathway" id="UPA00248">
    <property type="reaction ID" value="UER00314"/>
</dbReference>
<dbReference type="Proteomes" id="UP000000558">
    <property type="component" value="Chromosome"/>
</dbReference>
<dbReference type="Proteomes" id="UP000002519">
    <property type="component" value="Chromosome"/>
</dbReference>
<dbReference type="GO" id="GO:0005829">
    <property type="term" value="C:cytosol"/>
    <property type="evidence" value="ECO:0007669"/>
    <property type="project" value="TreeGrafter"/>
</dbReference>
<dbReference type="GO" id="GO:0004766">
    <property type="term" value="F:spermidine synthase activity"/>
    <property type="evidence" value="ECO:0007669"/>
    <property type="project" value="UniProtKB-UniRule"/>
</dbReference>
<dbReference type="GO" id="GO:0008295">
    <property type="term" value="P:spermidine biosynthetic process"/>
    <property type="evidence" value="ECO:0007669"/>
    <property type="project" value="UniProtKB-UniRule"/>
</dbReference>
<dbReference type="CDD" id="cd02440">
    <property type="entry name" value="AdoMet_MTases"/>
    <property type="match status" value="1"/>
</dbReference>
<dbReference type="FunFam" id="2.30.140.10:FF:000002">
    <property type="entry name" value="Polyamine aminopropyltransferase"/>
    <property type="match status" value="1"/>
</dbReference>
<dbReference type="FunFam" id="3.40.50.150:FF:000026">
    <property type="entry name" value="Polyamine aminopropyltransferase"/>
    <property type="match status" value="1"/>
</dbReference>
<dbReference type="Gene3D" id="2.30.140.10">
    <property type="entry name" value="Spermidine synthase, tetramerisation domain"/>
    <property type="match status" value="1"/>
</dbReference>
<dbReference type="Gene3D" id="3.40.50.150">
    <property type="entry name" value="Vaccinia Virus protein VP39"/>
    <property type="match status" value="1"/>
</dbReference>
<dbReference type="HAMAP" id="MF_00198">
    <property type="entry name" value="Spermidine_synth"/>
    <property type="match status" value="1"/>
</dbReference>
<dbReference type="InterPro" id="IPR030374">
    <property type="entry name" value="PABS"/>
</dbReference>
<dbReference type="InterPro" id="IPR030373">
    <property type="entry name" value="PABS_CS"/>
</dbReference>
<dbReference type="InterPro" id="IPR029063">
    <property type="entry name" value="SAM-dependent_MTases_sf"/>
</dbReference>
<dbReference type="InterPro" id="IPR001045">
    <property type="entry name" value="Spermi_synthase"/>
</dbReference>
<dbReference type="InterPro" id="IPR035246">
    <property type="entry name" value="Spermidine_synt_N"/>
</dbReference>
<dbReference type="InterPro" id="IPR037163">
    <property type="entry name" value="Spermidine_synt_N_sf"/>
</dbReference>
<dbReference type="NCBIfam" id="NF037959">
    <property type="entry name" value="MFS_SpdSyn"/>
    <property type="match status" value="1"/>
</dbReference>
<dbReference type="NCBIfam" id="NF002010">
    <property type="entry name" value="PRK00811.1"/>
    <property type="match status" value="1"/>
</dbReference>
<dbReference type="NCBIfam" id="TIGR00417">
    <property type="entry name" value="speE"/>
    <property type="match status" value="1"/>
</dbReference>
<dbReference type="PANTHER" id="PTHR11558:SF11">
    <property type="entry name" value="SPERMIDINE SYNTHASE"/>
    <property type="match status" value="1"/>
</dbReference>
<dbReference type="PANTHER" id="PTHR11558">
    <property type="entry name" value="SPERMIDINE/SPERMINE SYNTHASE"/>
    <property type="match status" value="1"/>
</dbReference>
<dbReference type="Pfam" id="PF17284">
    <property type="entry name" value="Spermine_synt_N"/>
    <property type="match status" value="1"/>
</dbReference>
<dbReference type="Pfam" id="PF01564">
    <property type="entry name" value="Spermine_synth"/>
    <property type="match status" value="1"/>
</dbReference>
<dbReference type="SUPFAM" id="SSF53335">
    <property type="entry name" value="S-adenosyl-L-methionine-dependent methyltransferases"/>
    <property type="match status" value="1"/>
</dbReference>
<dbReference type="PROSITE" id="PS01330">
    <property type="entry name" value="PABS_1"/>
    <property type="match status" value="1"/>
</dbReference>
<dbReference type="PROSITE" id="PS51006">
    <property type="entry name" value="PABS_2"/>
    <property type="match status" value="1"/>
</dbReference>
<comment type="function">
    <text evidence="2">Catalyzes the irreversible transfer of a propylamine group from the amino donor S-adenosylmethioninamine (decarboxy-AdoMet) to putrescine (1,4-diaminobutane) to yield spermidine.</text>
</comment>
<comment type="catalytic activity">
    <reaction evidence="2">
        <text>S-adenosyl 3-(methylsulfanyl)propylamine + putrescine = S-methyl-5'-thioadenosine + spermidine + H(+)</text>
        <dbReference type="Rhea" id="RHEA:12721"/>
        <dbReference type="ChEBI" id="CHEBI:15378"/>
        <dbReference type="ChEBI" id="CHEBI:17509"/>
        <dbReference type="ChEBI" id="CHEBI:57443"/>
        <dbReference type="ChEBI" id="CHEBI:57834"/>
        <dbReference type="ChEBI" id="CHEBI:326268"/>
        <dbReference type="EC" id="2.5.1.16"/>
    </reaction>
</comment>
<comment type="pathway">
    <text evidence="2">Amine and polyamine biosynthesis; spermidine biosynthesis; spermidine from putrescine: step 1/1.</text>
</comment>
<comment type="subunit">
    <text evidence="2">Homodimer or homotetramer.</text>
</comment>
<comment type="subcellular location">
    <subcellularLocation>
        <location evidence="2">Cytoplasm</location>
    </subcellularLocation>
</comment>
<comment type="similarity">
    <text evidence="2">Belongs to the spermidine/spermine synthase family.</text>
</comment>
<organism>
    <name type="scientific">Escherichia coli O157:H7</name>
    <dbReference type="NCBI Taxonomy" id="83334"/>
    <lineage>
        <taxon>Bacteria</taxon>
        <taxon>Pseudomonadati</taxon>
        <taxon>Pseudomonadota</taxon>
        <taxon>Gammaproteobacteria</taxon>
        <taxon>Enterobacterales</taxon>
        <taxon>Enterobacteriaceae</taxon>
        <taxon>Escherichia</taxon>
    </lineage>
</organism>
<name>SPEE_ECO57</name>
<proteinExistence type="inferred from homology"/>
<gene>
    <name evidence="2" type="primary">speE</name>
    <name type="ordered locus">Z0131</name>
    <name type="ordered locus">ECs0125</name>
</gene>
<keyword id="KW-0963">Cytoplasm</keyword>
<keyword id="KW-0620">Polyamine biosynthesis</keyword>
<keyword id="KW-1185">Reference proteome</keyword>
<keyword id="KW-0745">Spermidine biosynthesis</keyword>
<keyword id="KW-0808">Transferase</keyword>
<protein>
    <recommendedName>
        <fullName evidence="2">Polyamine aminopropyltransferase</fullName>
    </recommendedName>
    <alternativeName>
        <fullName evidence="2">Putrescine aminopropyltransferase</fullName>
        <shortName evidence="2">PAPT</shortName>
    </alternativeName>
    <alternativeName>
        <fullName evidence="2">Spermidine synthase</fullName>
        <shortName evidence="2">SPDS</shortName>
        <shortName evidence="2">SPDSY</shortName>
        <ecNumber evidence="2">2.5.1.16</ecNumber>
    </alternativeName>
</protein>
<evidence type="ECO:0000250" key="1"/>
<evidence type="ECO:0000255" key="2">
    <source>
        <dbReference type="HAMAP-Rule" id="MF_00198"/>
    </source>
</evidence>
<sequence>MAEKKQWHETLHDQFGQYFAVDNVLYHEKTDHQDLIIFENAAFGRVMALDGVVQTTERDEFIYHEMMTHVPLLAHGHAKHVLIIGGGDGAMLREVTRHKNVESITMVEIDAGVVSFCRQYLPNHNAGSYDDPRFKLVIDDGVNFVNQTSQTFDVIISDCTDPIGPGESLFTSAFYEGCKRCLNPGGIFVAQNGVCFLQQEEAIDSHRKLSHYFSDVGFYQAAIPTYYGGIMTFAWATDNDALRHLSTEIIQARFLASGLKCRYYNPAVHTAAFALPQYLQDALASQPS</sequence>
<reference key="1">
    <citation type="journal article" date="2001" name="Nature">
        <title>Genome sequence of enterohaemorrhagic Escherichia coli O157:H7.</title>
        <authorList>
            <person name="Perna N.T."/>
            <person name="Plunkett G. III"/>
            <person name="Burland V."/>
            <person name="Mau B."/>
            <person name="Glasner J.D."/>
            <person name="Rose D.J."/>
            <person name="Mayhew G.F."/>
            <person name="Evans P.S."/>
            <person name="Gregor J."/>
            <person name="Kirkpatrick H.A."/>
            <person name="Posfai G."/>
            <person name="Hackett J."/>
            <person name="Klink S."/>
            <person name="Boutin A."/>
            <person name="Shao Y."/>
            <person name="Miller L."/>
            <person name="Grotbeck E.J."/>
            <person name="Davis N.W."/>
            <person name="Lim A."/>
            <person name="Dimalanta E.T."/>
            <person name="Potamousis K."/>
            <person name="Apodaca J."/>
            <person name="Anantharaman T.S."/>
            <person name="Lin J."/>
            <person name="Yen G."/>
            <person name="Schwartz D.C."/>
            <person name="Welch R.A."/>
            <person name="Blattner F.R."/>
        </authorList>
    </citation>
    <scope>NUCLEOTIDE SEQUENCE [LARGE SCALE GENOMIC DNA]</scope>
    <source>
        <strain>O157:H7 / EDL933 / ATCC 700927 / EHEC</strain>
    </source>
</reference>
<reference key="2">
    <citation type="journal article" date="2001" name="DNA Res.">
        <title>Complete genome sequence of enterohemorrhagic Escherichia coli O157:H7 and genomic comparison with a laboratory strain K-12.</title>
        <authorList>
            <person name="Hayashi T."/>
            <person name="Makino K."/>
            <person name="Ohnishi M."/>
            <person name="Kurokawa K."/>
            <person name="Ishii K."/>
            <person name="Yokoyama K."/>
            <person name="Han C.-G."/>
            <person name="Ohtsubo E."/>
            <person name="Nakayama K."/>
            <person name="Murata T."/>
            <person name="Tanaka M."/>
            <person name="Tobe T."/>
            <person name="Iida T."/>
            <person name="Takami H."/>
            <person name="Honda T."/>
            <person name="Sasakawa C."/>
            <person name="Ogasawara N."/>
            <person name="Yasunaga T."/>
            <person name="Kuhara S."/>
            <person name="Shiba T."/>
            <person name="Hattori M."/>
            <person name="Shinagawa H."/>
        </authorList>
    </citation>
    <scope>NUCLEOTIDE SEQUENCE [LARGE SCALE GENOMIC DNA]</scope>
    <source>
        <strain>O157:H7 / Sakai / RIMD 0509952 / EHEC</strain>
    </source>
</reference>